<sequence>MSAKEVKFGVDARDRMMRGVDILANAVKVTLGPKGRNVVLDKSFGAPRITKDGVTVAKEIELDDKFENMGAQMVREVASKSADAAGDGTTTATVLAQAIVREGGKAVAAGMNPMDLKRGIDLAVEAVVADLVKNSKKVTSNEEIAQVGTISANGDVEIGKFLSDAMKKVGNEGVITVEEAKSLETELDVVEGMQFDRGYISPYFVTNADKMRVEFDDAYILINEKKLSNLNELLPLLEAVVQTGKPLVIVAEDVEGEALATLVVNRLRGGLKVAAVKAPGFGDRRKAMLQDIAILTGGQAISEDLGIKMENVTLQMLGKAKKVMIDKENTTIVNGAGKKADIEARVAQIKAQIEETTSDYDREKLQERLAKLAGGVAVIRVGGATEIEVKERKDRVDDAMHATRAAVEEGIVPGGGVALLRASEQLKRIKTQNDDQKTGVEIVRKALSAPARQIAINAGEDGSVIVGKVLEKDQYNYGFDSQTGEYGDLVKKGIIDPTKVVRTAIQNAASVAALLITTEAMVAELPKKGGAAGGMPPGGGGMGGMDF</sequence>
<gene>
    <name evidence="1" type="primary">groEL1</name>
    <name evidence="1" type="synonym">groL1</name>
    <name type="ordered locus">RPD_2227</name>
</gene>
<protein>
    <recommendedName>
        <fullName evidence="1">Chaperonin GroEL 1</fullName>
        <ecNumber evidence="1">5.6.1.7</ecNumber>
    </recommendedName>
    <alternativeName>
        <fullName evidence="1">60 kDa chaperonin 1</fullName>
    </alternativeName>
    <alternativeName>
        <fullName evidence="1">Chaperonin-60 1</fullName>
        <shortName evidence="1">Cpn60 1</shortName>
    </alternativeName>
</protein>
<name>CH601_RHOPS</name>
<proteinExistence type="inferred from homology"/>
<keyword id="KW-0067">ATP-binding</keyword>
<keyword id="KW-0143">Chaperone</keyword>
<keyword id="KW-0963">Cytoplasm</keyword>
<keyword id="KW-0413">Isomerase</keyword>
<keyword id="KW-0547">Nucleotide-binding</keyword>
<accession>Q138M7</accession>
<organism>
    <name type="scientific">Rhodopseudomonas palustris (strain BisB5)</name>
    <dbReference type="NCBI Taxonomy" id="316057"/>
    <lineage>
        <taxon>Bacteria</taxon>
        <taxon>Pseudomonadati</taxon>
        <taxon>Pseudomonadota</taxon>
        <taxon>Alphaproteobacteria</taxon>
        <taxon>Hyphomicrobiales</taxon>
        <taxon>Nitrobacteraceae</taxon>
        <taxon>Rhodopseudomonas</taxon>
    </lineage>
</organism>
<feature type="chain" id="PRO_0000332061" description="Chaperonin GroEL 1">
    <location>
        <begin position="1"/>
        <end position="547"/>
    </location>
</feature>
<feature type="binding site" evidence="1">
    <location>
        <begin position="30"/>
        <end position="33"/>
    </location>
    <ligand>
        <name>ATP</name>
        <dbReference type="ChEBI" id="CHEBI:30616"/>
    </ligand>
</feature>
<feature type="binding site" evidence="1">
    <location>
        <position position="51"/>
    </location>
    <ligand>
        <name>ATP</name>
        <dbReference type="ChEBI" id="CHEBI:30616"/>
    </ligand>
</feature>
<feature type="binding site" evidence="1">
    <location>
        <begin position="87"/>
        <end position="91"/>
    </location>
    <ligand>
        <name>ATP</name>
        <dbReference type="ChEBI" id="CHEBI:30616"/>
    </ligand>
</feature>
<feature type="binding site" evidence="1">
    <location>
        <position position="415"/>
    </location>
    <ligand>
        <name>ATP</name>
        <dbReference type="ChEBI" id="CHEBI:30616"/>
    </ligand>
</feature>
<feature type="binding site" evidence="1">
    <location>
        <position position="496"/>
    </location>
    <ligand>
        <name>ATP</name>
        <dbReference type="ChEBI" id="CHEBI:30616"/>
    </ligand>
</feature>
<reference key="1">
    <citation type="submission" date="2006-03" db="EMBL/GenBank/DDBJ databases">
        <title>Complete sequence of Rhodopseudomonas palustris BisB5.</title>
        <authorList>
            <consortium name="US DOE Joint Genome Institute"/>
            <person name="Copeland A."/>
            <person name="Lucas S."/>
            <person name="Lapidus A."/>
            <person name="Barry K."/>
            <person name="Detter J.C."/>
            <person name="Glavina del Rio T."/>
            <person name="Hammon N."/>
            <person name="Israni S."/>
            <person name="Dalin E."/>
            <person name="Tice H."/>
            <person name="Pitluck S."/>
            <person name="Chain P."/>
            <person name="Malfatti S."/>
            <person name="Shin M."/>
            <person name="Vergez L."/>
            <person name="Schmutz J."/>
            <person name="Larimer F."/>
            <person name="Land M."/>
            <person name="Hauser L."/>
            <person name="Pelletier D.A."/>
            <person name="Kyrpides N."/>
            <person name="Lykidis A."/>
            <person name="Oda Y."/>
            <person name="Harwood C.S."/>
            <person name="Richardson P."/>
        </authorList>
    </citation>
    <scope>NUCLEOTIDE SEQUENCE [LARGE SCALE GENOMIC DNA]</scope>
    <source>
        <strain>BisB5</strain>
    </source>
</reference>
<evidence type="ECO:0000255" key="1">
    <source>
        <dbReference type="HAMAP-Rule" id="MF_00600"/>
    </source>
</evidence>
<comment type="function">
    <text evidence="1">Together with its co-chaperonin GroES, plays an essential role in assisting protein folding. The GroEL-GroES system forms a nano-cage that allows encapsulation of the non-native substrate proteins and provides a physical environment optimized to promote and accelerate protein folding.</text>
</comment>
<comment type="catalytic activity">
    <reaction evidence="1">
        <text>ATP + H2O + a folded polypeptide = ADP + phosphate + an unfolded polypeptide.</text>
        <dbReference type="EC" id="5.6.1.7"/>
    </reaction>
</comment>
<comment type="subunit">
    <text evidence="1">Forms a cylinder of 14 subunits composed of two heptameric rings stacked back-to-back. Interacts with the co-chaperonin GroES.</text>
</comment>
<comment type="subcellular location">
    <subcellularLocation>
        <location evidence="1">Cytoplasm</location>
    </subcellularLocation>
</comment>
<comment type="similarity">
    <text evidence="1">Belongs to the chaperonin (HSP60) family.</text>
</comment>
<dbReference type="EC" id="5.6.1.7" evidence="1"/>
<dbReference type="EMBL" id="CP000283">
    <property type="protein sequence ID" value="ABE39462.1"/>
    <property type="molecule type" value="Genomic_DNA"/>
</dbReference>
<dbReference type="SMR" id="Q138M7"/>
<dbReference type="STRING" id="316057.RPD_2227"/>
<dbReference type="KEGG" id="rpd:RPD_2227"/>
<dbReference type="eggNOG" id="COG0459">
    <property type="taxonomic scope" value="Bacteria"/>
</dbReference>
<dbReference type="HOGENOM" id="CLU_016503_3_0_5"/>
<dbReference type="BioCyc" id="RPAL316057:RPD_RS11180-MONOMER"/>
<dbReference type="Proteomes" id="UP000001818">
    <property type="component" value="Chromosome"/>
</dbReference>
<dbReference type="GO" id="GO:0005737">
    <property type="term" value="C:cytoplasm"/>
    <property type="evidence" value="ECO:0007669"/>
    <property type="project" value="UniProtKB-SubCell"/>
</dbReference>
<dbReference type="GO" id="GO:0005524">
    <property type="term" value="F:ATP binding"/>
    <property type="evidence" value="ECO:0007669"/>
    <property type="project" value="UniProtKB-UniRule"/>
</dbReference>
<dbReference type="GO" id="GO:0140662">
    <property type="term" value="F:ATP-dependent protein folding chaperone"/>
    <property type="evidence" value="ECO:0007669"/>
    <property type="project" value="InterPro"/>
</dbReference>
<dbReference type="GO" id="GO:0016853">
    <property type="term" value="F:isomerase activity"/>
    <property type="evidence" value="ECO:0007669"/>
    <property type="project" value="UniProtKB-KW"/>
</dbReference>
<dbReference type="GO" id="GO:0051082">
    <property type="term" value="F:unfolded protein binding"/>
    <property type="evidence" value="ECO:0007669"/>
    <property type="project" value="UniProtKB-UniRule"/>
</dbReference>
<dbReference type="GO" id="GO:0042026">
    <property type="term" value="P:protein refolding"/>
    <property type="evidence" value="ECO:0007669"/>
    <property type="project" value="UniProtKB-UniRule"/>
</dbReference>
<dbReference type="CDD" id="cd03344">
    <property type="entry name" value="GroEL"/>
    <property type="match status" value="1"/>
</dbReference>
<dbReference type="FunFam" id="1.10.560.10:FF:000001">
    <property type="entry name" value="60 kDa chaperonin"/>
    <property type="match status" value="1"/>
</dbReference>
<dbReference type="FunFam" id="3.50.7.10:FF:000001">
    <property type="entry name" value="60 kDa chaperonin"/>
    <property type="match status" value="1"/>
</dbReference>
<dbReference type="Gene3D" id="3.50.7.10">
    <property type="entry name" value="GroEL"/>
    <property type="match status" value="1"/>
</dbReference>
<dbReference type="Gene3D" id="1.10.560.10">
    <property type="entry name" value="GroEL-like equatorial domain"/>
    <property type="match status" value="1"/>
</dbReference>
<dbReference type="Gene3D" id="3.30.260.10">
    <property type="entry name" value="TCP-1-like chaperonin intermediate domain"/>
    <property type="match status" value="1"/>
</dbReference>
<dbReference type="HAMAP" id="MF_00600">
    <property type="entry name" value="CH60"/>
    <property type="match status" value="1"/>
</dbReference>
<dbReference type="InterPro" id="IPR018370">
    <property type="entry name" value="Chaperonin_Cpn60_CS"/>
</dbReference>
<dbReference type="InterPro" id="IPR001844">
    <property type="entry name" value="Cpn60/GroEL"/>
</dbReference>
<dbReference type="InterPro" id="IPR002423">
    <property type="entry name" value="Cpn60/GroEL/TCP-1"/>
</dbReference>
<dbReference type="InterPro" id="IPR027409">
    <property type="entry name" value="GroEL-like_apical_dom_sf"/>
</dbReference>
<dbReference type="InterPro" id="IPR027413">
    <property type="entry name" value="GROEL-like_equatorial_sf"/>
</dbReference>
<dbReference type="InterPro" id="IPR027410">
    <property type="entry name" value="TCP-1-like_intermed_sf"/>
</dbReference>
<dbReference type="NCBIfam" id="TIGR02348">
    <property type="entry name" value="GroEL"/>
    <property type="match status" value="1"/>
</dbReference>
<dbReference type="NCBIfam" id="NF000592">
    <property type="entry name" value="PRK00013.1"/>
    <property type="match status" value="1"/>
</dbReference>
<dbReference type="NCBIfam" id="NF009487">
    <property type="entry name" value="PRK12849.1"/>
    <property type="match status" value="1"/>
</dbReference>
<dbReference type="NCBIfam" id="NF009488">
    <property type="entry name" value="PRK12850.1"/>
    <property type="match status" value="1"/>
</dbReference>
<dbReference type="NCBIfam" id="NF009489">
    <property type="entry name" value="PRK12851.1"/>
    <property type="match status" value="1"/>
</dbReference>
<dbReference type="NCBIfam" id="NF010704">
    <property type="entry name" value="PRK14104.1"/>
    <property type="match status" value="1"/>
</dbReference>
<dbReference type="PANTHER" id="PTHR45633">
    <property type="entry name" value="60 KDA HEAT SHOCK PROTEIN, MITOCHONDRIAL"/>
    <property type="match status" value="1"/>
</dbReference>
<dbReference type="Pfam" id="PF00118">
    <property type="entry name" value="Cpn60_TCP1"/>
    <property type="match status" value="1"/>
</dbReference>
<dbReference type="PRINTS" id="PR00298">
    <property type="entry name" value="CHAPERONIN60"/>
</dbReference>
<dbReference type="SUPFAM" id="SSF52029">
    <property type="entry name" value="GroEL apical domain-like"/>
    <property type="match status" value="1"/>
</dbReference>
<dbReference type="SUPFAM" id="SSF48592">
    <property type="entry name" value="GroEL equatorial domain-like"/>
    <property type="match status" value="1"/>
</dbReference>
<dbReference type="SUPFAM" id="SSF54849">
    <property type="entry name" value="GroEL-intermediate domain like"/>
    <property type="match status" value="1"/>
</dbReference>
<dbReference type="PROSITE" id="PS00296">
    <property type="entry name" value="CHAPERONINS_CPN60"/>
    <property type="match status" value="1"/>
</dbReference>